<name>MCE_TALPI</name>
<comment type="function">
    <text evidence="5 9">Multicopper oxidase; part of the gene cluster that mediates the biosynthesis of dinapinones DPA1 (or (M)-DPA) and DPA2 (or (P)-DPA), biaryl dihydronaphthopyranones that act in concert as inhibitors of triacylglycerol accumulation in mammalian cells (PubMed:29468784). The first step in the pathway corresponds to the biosynthesis of dihydroxy-decanoyl-CoA by the fungal type I fatty acid synthase (formed by ORF4 and ORF5) (Probable). The cluster-specific polyketide synthase (ORF7) then accepts and extends dihydroxy-decanoyl-CoA with 6 malonyl-CoA moieties and cyclizes the molecule to produce a putative polyhydroxynaphthopyranone intermediate, which is further methylated by the cluster-specific methyltransferase (ORF1) at 7-OH to produce monapinone A (MPA) (Probable). MCE catalyzes the regioselective biaryl coupling of monapinone A (MPA) at the 8,8'-positions to afford dimeric atropisomers DPA1 and DPA2 in a ratio of approximately 1:2.5 (PubMed:29468784). Monapinone E (MPE) also appears to be a substrate for MCE and provides the atropisomers dinapinones DPE1 (or (M)-DPE) and DPE2 (or (P)-DPE) (PubMed:29468784).</text>
</comment>
<comment type="catalytic activity">
    <reaction evidence="5">
        <text>4 monapinone A + O2 = 2 dinapinone A + 2 H2O</text>
        <dbReference type="Rhea" id="RHEA:62812"/>
        <dbReference type="ChEBI" id="CHEBI:15377"/>
        <dbReference type="ChEBI" id="CHEBI:15379"/>
        <dbReference type="ChEBI" id="CHEBI:145922"/>
        <dbReference type="ChEBI" id="CHEBI:145923"/>
    </reaction>
    <physiologicalReaction direction="left-to-right" evidence="5">
        <dbReference type="Rhea" id="RHEA:62813"/>
    </physiologicalReaction>
</comment>
<comment type="catalytic activity">
    <reaction evidence="5">
        <text>4 monapinone E + O2 = 2 dinapinone E + 2 H2O</text>
        <dbReference type="Rhea" id="RHEA:62816"/>
        <dbReference type="ChEBI" id="CHEBI:15377"/>
        <dbReference type="ChEBI" id="CHEBI:15379"/>
        <dbReference type="ChEBI" id="CHEBI:146004"/>
        <dbReference type="ChEBI" id="CHEBI:146005"/>
    </reaction>
    <physiologicalReaction direction="left-to-right" evidence="5">
        <dbReference type="Rhea" id="RHEA:62817"/>
    </physiologicalReaction>
</comment>
<comment type="biophysicochemical properties">
    <kinetics>
        <KM evidence="5">72.7 uM for monapinone A</KM>
        <KM evidence="5">85 uM for monapinone E</KM>
        <Vmax evidence="5">1.21 umol/min/mg enzyme toward monapinone A</Vmax>
        <Vmax evidence="5">3.33 umol/min/mg enzyme toward monapinone E</Vmax>
    </kinetics>
    <phDependence>
        <text evidence="5">Optimum pH is 4.0.</text>
    </phDependence>
    <temperatureDependence>
        <text evidence="5">Optimum temperature is 50 degrees Celsius.</text>
    </temperatureDependence>
</comment>
<comment type="pathway">
    <text evidence="5">Secondary metabolite biosynthesis.</text>
</comment>
<comment type="biotechnology">
    <text evidence="4 6">A mixture of dinapinones A1 and A2 at a ratio of 1:1 or 1:2 leads to inhibition of triacylglycerol accumulation in mammalian cells, suggesting that these compounds might be interresting to treat obesity (PubMed:21559025). This inhibitory activity is mostly provided by dinapinone A2 but is potentiated by dinapinone A1 (PubMed:21559025, PubMed:30108268). Dinapinones do not affect diacylglycerol acyltransferase (DGAT) activity but enhance neutral lipid degradation together with induction of autophagy (PubMed:30108268).</text>
</comment>
<comment type="similarity">
    <text evidence="8">Belongs to the multicopper oxidase family.</text>
</comment>
<dbReference type="EC" id="1.-.-.-" evidence="5"/>
<dbReference type="EMBL" id="LC030116">
    <property type="protein sequence ID" value="BAW99827.1"/>
    <property type="molecule type" value="Genomic_DNA"/>
</dbReference>
<dbReference type="SMR" id="A0A1S7IUL2"/>
<dbReference type="GlyCosmos" id="A0A1S7IUL2">
    <property type="glycosylation" value="13 sites, No reported glycans"/>
</dbReference>
<dbReference type="SABIO-RK" id="A0A1S7IUL2"/>
<dbReference type="GO" id="GO:0005507">
    <property type="term" value="F:copper ion binding"/>
    <property type="evidence" value="ECO:0007669"/>
    <property type="project" value="InterPro"/>
</dbReference>
<dbReference type="GO" id="GO:0016491">
    <property type="term" value="F:oxidoreductase activity"/>
    <property type="evidence" value="ECO:0007669"/>
    <property type="project" value="UniProtKB-KW"/>
</dbReference>
<dbReference type="CDD" id="cd13850">
    <property type="entry name" value="CuRO_1_Abr2_like"/>
    <property type="match status" value="1"/>
</dbReference>
<dbReference type="CDD" id="cd13876">
    <property type="entry name" value="CuRO_2_Abr2_like"/>
    <property type="match status" value="1"/>
</dbReference>
<dbReference type="CDD" id="cd13898">
    <property type="entry name" value="CuRO_3_Abr2_like"/>
    <property type="match status" value="1"/>
</dbReference>
<dbReference type="FunFam" id="2.60.40.420:FF:000036">
    <property type="entry name" value="L-ascorbate oxidase"/>
    <property type="match status" value="1"/>
</dbReference>
<dbReference type="Gene3D" id="2.60.40.420">
    <property type="entry name" value="Cupredoxins - blue copper proteins"/>
    <property type="match status" value="3"/>
</dbReference>
<dbReference type="InterPro" id="IPR011707">
    <property type="entry name" value="Cu-oxidase-like_N"/>
</dbReference>
<dbReference type="InterPro" id="IPR001117">
    <property type="entry name" value="Cu-oxidase_2nd"/>
</dbReference>
<dbReference type="InterPro" id="IPR011706">
    <property type="entry name" value="Cu-oxidase_C"/>
</dbReference>
<dbReference type="InterPro" id="IPR045087">
    <property type="entry name" value="Cu-oxidase_fam"/>
</dbReference>
<dbReference type="InterPro" id="IPR033138">
    <property type="entry name" value="Cu_oxidase_CS"/>
</dbReference>
<dbReference type="InterPro" id="IPR002355">
    <property type="entry name" value="Cu_oxidase_Cu_BS"/>
</dbReference>
<dbReference type="InterPro" id="IPR008972">
    <property type="entry name" value="Cupredoxin"/>
</dbReference>
<dbReference type="PANTHER" id="PTHR11709:SF488">
    <property type="entry name" value="LACCASE-RELATED"/>
    <property type="match status" value="1"/>
</dbReference>
<dbReference type="PANTHER" id="PTHR11709">
    <property type="entry name" value="MULTI-COPPER OXIDASE"/>
    <property type="match status" value="1"/>
</dbReference>
<dbReference type="Pfam" id="PF00394">
    <property type="entry name" value="Cu-oxidase"/>
    <property type="match status" value="1"/>
</dbReference>
<dbReference type="Pfam" id="PF07731">
    <property type="entry name" value="Cu-oxidase_2"/>
    <property type="match status" value="1"/>
</dbReference>
<dbReference type="Pfam" id="PF07732">
    <property type="entry name" value="Cu-oxidase_3"/>
    <property type="match status" value="1"/>
</dbReference>
<dbReference type="SUPFAM" id="SSF49503">
    <property type="entry name" value="Cupredoxins"/>
    <property type="match status" value="3"/>
</dbReference>
<dbReference type="PROSITE" id="PS00079">
    <property type="entry name" value="MULTICOPPER_OXIDASE1"/>
    <property type="match status" value="2"/>
</dbReference>
<dbReference type="PROSITE" id="PS00080">
    <property type="entry name" value="MULTICOPPER_OXIDASE2"/>
    <property type="match status" value="1"/>
</dbReference>
<accession>A0A1S7IUL2</accession>
<reference key="1">
    <citation type="journal article" date="2018" name="Angew. Chem. Int. Ed.">
        <title>Discovery of a fungal multicopper oxidase that catalyzes the regioselective coupling of a tricyclic naphthopyranone to produce atropisomers.</title>
        <authorList>
            <person name="Kawaguchi M."/>
            <person name="Ohshiro T."/>
            <person name="Toyoda M."/>
            <person name="Ohte S."/>
            <person name="Inokoshi J."/>
            <person name="Fujii I."/>
            <person name="Tomoda H."/>
        </authorList>
    </citation>
    <scope>NUCLEOTIDE SEQUENCE [GENOMIC DNA]</scope>
    <scope>FUNCTION</scope>
    <scope>SUBSTRATE SPECIFICITY</scope>
    <scope>CATALYTIC ACTIVITY</scope>
    <scope>BIOPHYSICOCHEMICAL PROPERTIES</scope>
    <source>
        <strain>FKI-3864</strain>
    </source>
</reference>
<reference key="2">
    <citation type="journal article" date="2011" name="J. Antibiot.">
        <title>Dinapinones, novel inhibitors of triacylglycerol synthesis in mammalian cells, produced by Penicillium pinophilum FKI-3864.</title>
        <authorList>
            <person name="Ohte S."/>
            <person name="Matsuda D."/>
            <person name="Uchida R."/>
            <person name="Nonaka K."/>
            <person name="Masuma R."/>
            <person name="Omura S."/>
            <person name="Tomoda H."/>
        </authorList>
    </citation>
    <scope>BIOTECHNOLOGY</scope>
</reference>
<reference key="3">
    <citation type="journal article" date="2018" name="Sci. Rep.">
        <title>A mixture of atropisomers enhances neutral lipid degradation in mammalian cells with autophagy induction.</title>
        <authorList>
            <person name="Kobayashi K."/>
            <person name="Ohte S."/>
            <person name="Ohshiro T."/>
            <person name="Ugaki N."/>
            <person name="Tomoda H."/>
        </authorList>
    </citation>
    <scope>BIOTECHNOLOGY</scope>
</reference>
<organism>
    <name type="scientific">Talaromyces pinophilus</name>
    <name type="common">Penicillium pinophilum</name>
    <dbReference type="NCBI Taxonomy" id="128442"/>
    <lineage>
        <taxon>Eukaryota</taxon>
        <taxon>Fungi</taxon>
        <taxon>Dikarya</taxon>
        <taxon>Ascomycota</taxon>
        <taxon>Pezizomycotina</taxon>
        <taxon>Eurotiomycetes</taxon>
        <taxon>Eurotiomycetidae</taxon>
        <taxon>Eurotiales</taxon>
        <taxon>Trichocomaceae</taxon>
        <taxon>Talaromyces</taxon>
        <taxon>Talaromyces sect. Talaromyces</taxon>
    </lineage>
</organism>
<evidence type="ECO:0000250" key="1">
    <source>
        <dbReference type="UniProtKB" id="Q70KY3"/>
    </source>
</evidence>
<evidence type="ECO:0000255" key="2"/>
<evidence type="ECO:0000255" key="3">
    <source>
        <dbReference type="PROSITE-ProRule" id="PRU00498"/>
    </source>
</evidence>
<evidence type="ECO:0000269" key="4">
    <source>
    </source>
</evidence>
<evidence type="ECO:0000269" key="5">
    <source>
    </source>
</evidence>
<evidence type="ECO:0000269" key="6">
    <source>
    </source>
</evidence>
<evidence type="ECO:0000303" key="7">
    <source>
    </source>
</evidence>
<evidence type="ECO:0000305" key="8"/>
<evidence type="ECO:0000305" key="9">
    <source>
    </source>
</evidence>
<feature type="signal peptide" evidence="2">
    <location>
        <begin position="1"/>
        <end position="21"/>
    </location>
</feature>
<feature type="chain" id="PRO_5012503969" description="Multicopper oxidase MCE">
    <location>
        <begin position="22"/>
        <end position="603"/>
    </location>
</feature>
<feature type="domain" description="Plastocyanin-like 1" evidence="2">
    <location>
        <begin position="30"/>
        <end position="144"/>
    </location>
</feature>
<feature type="domain" description="Plastocyanin-like 2" evidence="2">
    <location>
        <begin position="173"/>
        <end position="353"/>
    </location>
</feature>
<feature type="domain" description="Plastocyanin-like 3" evidence="2">
    <location>
        <begin position="450"/>
        <end position="581"/>
    </location>
</feature>
<feature type="binding site" evidence="1">
    <location>
        <position position="79"/>
    </location>
    <ligand>
        <name>Cu cation</name>
        <dbReference type="ChEBI" id="CHEBI:23378"/>
        <label>1</label>
    </ligand>
</feature>
<feature type="binding site" evidence="1">
    <location>
        <position position="81"/>
    </location>
    <ligand>
        <name>Cu cation</name>
        <dbReference type="ChEBI" id="CHEBI:23378"/>
        <label>2</label>
    </ligand>
</feature>
<feature type="binding site" evidence="1">
    <location>
        <position position="123"/>
    </location>
    <ligand>
        <name>Cu cation</name>
        <dbReference type="ChEBI" id="CHEBI:23378"/>
        <label>2</label>
    </ligand>
</feature>
<feature type="binding site" evidence="1">
    <location>
        <position position="125"/>
    </location>
    <ligand>
        <name>Cu cation</name>
        <dbReference type="ChEBI" id="CHEBI:23378"/>
        <label>3</label>
    </ligand>
</feature>
<feature type="binding site" evidence="1">
    <location>
        <position position="495"/>
    </location>
    <ligand>
        <name>Cu cation</name>
        <dbReference type="ChEBI" id="CHEBI:23378"/>
        <label>4</label>
    </ligand>
</feature>
<feature type="glycosylation site" description="N-linked (GlcNAc...) asparagine" evidence="3">
    <location>
        <position position="75"/>
    </location>
</feature>
<feature type="glycosylation site" description="N-linked (GlcNAc...) asparagine" evidence="3">
    <location>
        <position position="155"/>
    </location>
</feature>
<feature type="glycosylation site" description="N-linked (GlcNAc...) asparagine" evidence="3">
    <location>
        <position position="180"/>
    </location>
</feature>
<feature type="glycosylation site" description="N-linked (GlcNAc...) asparagine" evidence="3">
    <location>
        <position position="235"/>
    </location>
</feature>
<feature type="glycosylation site" description="N-linked (GlcNAc...) asparagine" evidence="3">
    <location>
        <position position="256"/>
    </location>
</feature>
<feature type="glycosylation site" description="N-linked (GlcNAc...) asparagine" evidence="3">
    <location>
        <position position="272"/>
    </location>
</feature>
<feature type="glycosylation site" description="N-linked (GlcNAc...) asparagine" evidence="3">
    <location>
        <position position="275"/>
    </location>
</feature>
<feature type="glycosylation site" description="N-linked (GlcNAc...) asparagine" evidence="3">
    <location>
        <position position="388"/>
    </location>
</feature>
<feature type="glycosylation site" description="N-linked (GlcNAc...) asparagine" evidence="3">
    <location>
        <position position="394"/>
    </location>
</feature>
<feature type="glycosylation site" description="N-linked (GlcNAc...) asparagine" evidence="3">
    <location>
        <position position="413"/>
    </location>
</feature>
<feature type="glycosylation site" description="N-linked (GlcNAc...) asparagine" evidence="3">
    <location>
        <position position="455"/>
    </location>
</feature>
<feature type="glycosylation site" description="N-linked (GlcNAc...) asparagine" evidence="3">
    <location>
        <position position="512"/>
    </location>
</feature>
<feature type="glycosylation site" description="N-linked (GlcNAc...) asparagine" evidence="3">
    <location>
        <position position="595"/>
    </location>
</feature>
<keyword id="KW-0186">Copper</keyword>
<keyword id="KW-0325">Glycoprotein</keyword>
<keyword id="KW-0479">Metal-binding</keyword>
<keyword id="KW-0560">Oxidoreductase</keyword>
<keyword id="KW-0677">Repeat</keyword>
<keyword id="KW-0732">Signal</keyword>
<sequence length="603" mass="67271">MNTFICSALICLSWLPGFIQARVLTKKLTITYAKGAPDGIERDMIFINGQFPGPDLIFDEGDDVVINVVNDMPFNTTVHWHGLLMQGTPWSDGVPGLTQKPIEPGESFVYRFKAEPAGTYWYHSHSRATLLDGLYGALWIRPKENVPMPFTMISNSSDDLSAMERAAKNPQLLIVSDWSNFTSWQYIQGLVASELDIFCVDSILLNGKGSSYCPGQRLLESELSAYMNYAFGGANITDKGCFPFVESTEGPYLPGNQSAIPDHMWKDCVLGNGSNETIYVDPEEKWVSLNIVMASTMKSVVFSIDEHDLWLYELDGQLIEPIKYQWVTMLPSKRYSVLVKLNKTPGDYTIRLPDQGFSQIISGFATFSYKGGQDIGQTTPWVTYGGQNASDQGNGSGLTDLLPAPFPALRPRNTSDVFFVYNLYRWNAAYTWSLTGAAAMPVDDWAYQPLLYNPNSTAAHDKSLVIRTKYGQWVDLILQVGSKPDERQEINHVIHKHSSRAWQVGSGSGIWNYTSVDEAATLHPELFNFENPPYMDVFATSFEGPSWLIMRYQVTNPGPWLLHCHSEIHLAGGMAGVIMDGVDRWPTIPPAYAPNATGHYPLV</sequence>
<gene>
    <name evidence="7" type="primary">MCE</name>
    <name evidence="7" type="synonym">ORF6</name>
</gene>
<protein>
    <recommendedName>
        <fullName evidence="7">Multicopper oxidase MCE</fullName>
        <ecNumber evidence="5">1.-.-.-</ecNumber>
    </recommendedName>
    <alternativeName>
        <fullName evidence="7">Dinapinone A biosynthesis cluster protein MCE</fullName>
    </alternativeName>
    <alternativeName>
        <fullName evidence="7">Monapinone coupling enzyme</fullName>
        <shortName evidence="7">MCE</shortName>
    </alternativeName>
</protein>
<proteinExistence type="evidence at protein level"/>